<name>C75AK_ARATH</name>
<reference key="1">
    <citation type="journal article" date="2000" name="DNA Res.">
        <title>Structural analysis of Arabidopsis thaliana chromosome 3. II. Sequence features of the 4,251,695 bp regions covered by 90 P1, TAC and BAC clones.</title>
        <authorList>
            <person name="Kaneko T."/>
            <person name="Katoh T."/>
            <person name="Sato S."/>
            <person name="Nakamura Y."/>
            <person name="Asamizu E."/>
            <person name="Tabata S."/>
        </authorList>
    </citation>
    <scope>NUCLEOTIDE SEQUENCE [LARGE SCALE GENOMIC DNA]</scope>
    <source>
        <strain>cv. Columbia</strain>
    </source>
</reference>
<reference key="2">
    <citation type="journal article" date="2017" name="Plant J.">
        <title>Araport11: a complete reannotation of the Arabidopsis thaliana reference genome.</title>
        <authorList>
            <person name="Cheng C.Y."/>
            <person name="Krishnakumar V."/>
            <person name="Chan A.P."/>
            <person name="Thibaud-Nissen F."/>
            <person name="Schobel S."/>
            <person name="Town C.D."/>
        </authorList>
    </citation>
    <scope>GENOME REANNOTATION</scope>
    <source>
        <strain>cv. Columbia</strain>
    </source>
</reference>
<reference key="3">
    <citation type="journal article" date="2003" name="Science">
        <title>Empirical analysis of transcriptional activity in the Arabidopsis genome.</title>
        <authorList>
            <person name="Yamada K."/>
            <person name="Lim J."/>
            <person name="Dale J.M."/>
            <person name="Chen H."/>
            <person name="Shinn P."/>
            <person name="Palm C.J."/>
            <person name="Southwick A.M."/>
            <person name="Wu H.C."/>
            <person name="Kim C.J."/>
            <person name="Nguyen M."/>
            <person name="Pham P.K."/>
            <person name="Cheuk R.F."/>
            <person name="Karlin-Newmann G."/>
            <person name="Liu S.X."/>
            <person name="Lam B."/>
            <person name="Sakano H."/>
            <person name="Wu T."/>
            <person name="Yu G."/>
            <person name="Miranda M."/>
            <person name="Quach H.L."/>
            <person name="Tripp M."/>
            <person name="Chang C.H."/>
            <person name="Lee J.M."/>
            <person name="Toriumi M.J."/>
            <person name="Chan M.M."/>
            <person name="Tang C.C."/>
            <person name="Onodera C.S."/>
            <person name="Deng J.M."/>
            <person name="Akiyama K."/>
            <person name="Ansari Y."/>
            <person name="Arakawa T."/>
            <person name="Banh J."/>
            <person name="Banno F."/>
            <person name="Bowser L."/>
            <person name="Brooks S.Y."/>
            <person name="Carninci P."/>
            <person name="Chao Q."/>
            <person name="Choy N."/>
            <person name="Enju A."/>
            <person name="Goldsmith A.D."/>
            <person name="Gurjal M."/>
            <person name="Hansen N.F."/>
            <person name="Hayashizaki Y."/>
            <person name="Johnson-Hopson C."/>
            <person name="Hsuan V.W."/>
            <person name="Iida K."/>
            <person name="Karnes M."/>
            <person name="Khan S."/>
            <person name="Koesema E."/>
            <person name="Ishida J."/>
            <person name="Jiang P.X."/>
            <person name="Jones T."/>
            <person name="Kawai J."/>
            <person name="Kamiya A."/>
            <person name="Meyers C."/>
            <person name="Nakajima M."/>
            <person name="Narusaka M."/>
            <person name="Seki M."/>
            <person name="Sakurai T."/>
            <person name="Satou M."/>
            <person name="Tamse R."/>
            <person name="Vaysberg M."/>
            <person name="Wallender E.K."/>
            <person name="Wong C."/>
            <person name="Yamamura Y."/>
            <person name="Yuan S."/>
            <person name="Shinozaki K."/>
            <person name="Davis R.W."/>
            <person name="Theologis A."/>
            <person name="Ecker J.R."/>
        </authorList>
    </citation>
    <scope>NUCLEOTIDE SEQUENCE [LARGE SCALE MRNA]</scope>
    <source>
        <strain>cv. Columbia</strain>
    </source>
</reference>
<reference key="4">
    <citation type="journal article" date="2002" name="Science">
        <title>Functional annotation of a full-length Arabidopsis cDNA collection.</title>
        <authorList>
            <person name="Seki M."/>
            <person name="Narusaka M."/>
            <person name="Kamiya A."/>
            <person name="Ishida J."/>
            <person name="Satou M."/>
            <person name="Sakurai T."/>
            <person name="Nakajima M."/>
            <person name="Enju A."/>
            <person name="Akiyama K."/>
            <person name="Oono Y."/>
            <person name="Muramatsu M."/>
            <person name="Hayashizaki Y."/>
            <person name="Kawai J."/>
            <person name="Carninci P."/>
            <person name="Itoh M."/>
            <person name="Ishii Y."/>
            <person name="Arakawa T."/>
            <person name="Shibata K."/>
            <person name="Shinagawa A."/>
            <person name="Shinozaki K."/>
        </authorList>
    </citation>
    <scope>NUCLEOTIDE SEQUENCE [LARGE SCALE MRNA]</scope>
    <source>
        <strain>cv. Columbia</strain>
    </source>
</reference>
<keyword id="KW-0349">Heme</keyword>
<keyword id="KW-0408">Iron</keyword>
<keyword id="KW-0472">Membrane</keyword>
<keyword id="KW-0479">Metal-binding</keyword>
<keyword id="KW-0503">Monooxygenase</keyword>
<keyword id="KW-0560">Oxidoreductase</keyword>
<keyword id="KW-1185">Reference proteome</keyword>
<keyword id="KW-0812">Transmembrane</keyword>
<keyword id="KW-1133">Transmembrane helix</keyword>
<accession>Q9LJY7</accession>
<proteinExistence type="evidence at transcript level"/>
<protein>
    <recommendedName>
        <fullName>Cytochrome P450 705A20</fullName>
        <ecNumber>1.14.-.-</ecNumber>
    </recommendedName>
</protein>
<gene>
    <name type="primary">CYP705A20</name>
    <name type="ordered locus">At3g20110</name>
    <name type="ORF">MAL21.15</name>
</gene>
<dbReference type="EC" id="1.14.-.-"/>
<dbReference type="EMBL" id="AP000383">
    <property type="protein sequence ID" value="BAB01871.1"/>
    <property type="molecule type" value="Genomic_DNA"/>
</dbReference>
<dbReference type="EMBL" id="CP002686">
    <property type="protein sequence ID" value="AEE76334.1"/>
    <property type="molecule type" value="Genomic_DNA"/>
</dbReference>
<dbReference type="EMBL" id="BT006102">
    <property type="protein sequence ID" value="AAP04087.1"/>
    <property type="molecule type" value="mRNA"/>
</dbReference>
<dbReference type="EMBL" id="AK118830">
    <property type="protein sequence ID" value="BAC43420.1"/>
    <property type="molecule type" value="mRNA"/>
</dbReference>
<dbReference type="RefSeq" id="NP_188646.1">
    <property type="nucleotide sequence ID" value="NM_112902.3"/>
</dbReference>
<dbReference type="SMR" id="Q9LJY7"/>
<dbReference type="BioGRID" id="6886">
    <property type="interactions" value="7"/>
</dbReference>
<dbReference type="FunCoup" id="Q9LJY7">
    <property type="interactions" value="208"/>
</dbReference>
<dbReference type="IntAct" id="Q9LJY7">
    <property type="interactions" value="7"/>
</dbReference>
<dbReference type="STRING" id="3702.Q9LJY7"/>
<dbReference type="iPTMnet" id="Q9LJY7"/>
<dbReference type="PaxDb" id="3702-AT3G20110.1"/>
<dbReference type="ProteomicsDB" id="239212"/>
<dbReference type="EnsemblPlants" id="AT3G20110.1">
    <property type="protein sequence ID" value="AT3G20110.1"/>
    <property type="gene ID" value="AT3G20110"/>
</dbReference>
<dbReference type="GeneID" id="821554"/>
<dbReference type="Gramene" id="AT3G20110.1">
    <property type="protein sequence ID" value="AT3G20110.1"/>
    <property type="gene ID" value="AT3G20110"/>
</dbReference>
<dbReference type="KEGG" id="ath:AT3G20110"/>
<dbReference type="Araport" id="AT3G20110"/>
<dbReference type="TAIR" id="AT3G20110">
    <property type="gene designation" value="CYP705A20"/>
</dbReference>
<dbReference type="eggNOG" id="KOG0156">
    <property type="taxonomic scope" value="Eukaryota"/>
</dbReference>
<dbReference type="HOGENOM" id="CLU_001570_4_0_1"/>
<dbReference type="InParanoid" id="Q9LJY7"/>
<dbReference type="OMA" id="PVARTIK"/>
<dbReference type="PhylomeDB" id="Q9LJY7"/>
<dbReference type="BioCyc" id="ARA:AT3G20110-MONOMER"/>
<dbReference type="PRO" id="PR:Q9LJY7"/>
<dbReference type="Proteomes" id="UP000006548">
    <property type="component" value="Chromosome 3"/>
</dbReference>
<dbReference type="ExpressionAtlas" id="Q9LJY7">
    <property type="expression patterns" value="baseline and differential"/>
</dbReference>
<dbReference type="GO" id="GO:0016020">
    <property type="term" value="C:membrane"/>
    <property type="evidence" value="ECO:0007669"/>
    <property type="project" value="UniProtKB-SubCell"/>
</dbReference>
<dbReference type="GO" id="GO:0020037">
    <property type="term" value="F:heme binding"/>
    <property type="evidence" value="ECO:0007669"/>
    <property type="project" value="InterPro"/>
</dbReference>
<dbReference type="GO" id="GO:0005506">
    <property type="term" value="F:iron ion binding"/>
    <property type="evidence" value="ECO:0007669"/>
    <property type="project" value="InterPro"/>
</dbReference>
<dbReference type="GO" id="GO:0004497">
    <property type="term" value="F:monooxygenase activity"/>
    <property type="evidence" value="ECO:0007669"/>
    <property type="project" value="UniProtKB-KW"/>
</dbReference>
<dbReference type="GO" id="GO:0016705">
    <property type="term" value="F:oxidoreductase activity, acting on paired donors, with incorporation or reduction of molecular oxygen"/>
    <property type="evidence" value="ECO:0007669"/>
    <property type="project" value="InterPro"/>
</dbReference>
<dbReference type="CDD" id="cd20655">
    <property type="entry name" value="CYP93"/>
    <property type="match status" value="1"/>
</dbReference>
<dbReference type="FunFam" id="1.10.630.10:FF:000019">
    <property type="entry name" value="Cytochrome P450 family protein"/>
    <property type="match status" value="1"/>
</dbReference>
<dbReference type="Gene3D" id="1.10.630.10">
    <property type="entry name" value="Cytochrome P450"/>
    <property type="match status" value="1"/>
</dbReference>
<dbReference type="InterPro" id="IPR001128">
    <property type="entry name" value="Cyt_P450"/>
</dbReference>
<dbReference type="InterPro" id="IPR017972">
    <property type="entry name" value="Cyt_P450_CS"/>
</dbReference>
<dbReference type="InterPro" id="IPR002401">
    <property type="entry name" value="Cyt_P450_E_grp-I"/>
</dbReference>
<dbReference type="InterPro" id="IPR036396">
    <property type="entry name" value="Cyt_P450_sf"/>
</dbReference>
<dbReference type="InterPro" id="IPR051103">
    <property type="entry name" value="Plant_metabolite_P450s"/>
</dbReference>
<dbReference type="PANTHER" id="PTHR24298:SF541">
    <property type="entry name" value="CYTOCHROME P450 705A20-RELATED"/>
    <property type="match status" value="1"/>
</dbReference>
<dbReference type="PANTHER" id="PTHR24298">
    <property type="entry name" value="FLAVONOID 3'-MONOOXYGENASE-RELATED"/>
    <property type="match status" value="1"/>
</dbReference>
<dbReference type="Pfam" id="PF00067">
    <property type="entry name" value="p450"/>
    <property type="match status" value="1"/>
</dbReference>
<dbReference type="PRINTS" id="PR00463">
    <property type="entry name" value="EP450I"/>
</dbReference>
<dbReference type="PRINTS" id="PR00385">
    <property type="entry name" value="P450"/>
</dbReference>
<dbReference type="SUPFAM" id="SSF48264">
    <property type="entry name" value="Cytochrome P450"/>
    <property type="match status" value="1"/>
</dbReference>
<dbReference type="PROSITE" id="PS00086">
    <property type="entry name" value="CYTOCHROME_P450"/>
    <property type="match status" value="1"/>
</dbReference>
<feature type="chain" id="PRO_0000326467" description="Cytochrome P450 705A20">
    <location>
        <begin position="1"/>
        <end position="510"/>
    </location>
</feature>
<feature type="transmembrane region" description="Helical" evidence="2">
    <location>
        <begin position="7"/>
        <end position="27"/>
    </location>
</feature>
<comment type="cofactor">
    <cofactor evidence="1">
        <name>heme</name>
        <dbReference type="ChEBI" id="CHEBI:30413"/>
    </cofactor>
</comment>
<comment type="subcellular location">
    <subcellularLocation>
        <location evidence="3">Membrane</location>
        <topology evidence="3">Single-pass membrane protein</topology>
    </subcellularLocation>
</comment>
<comment type="similarity">
    <text evidence="3">Belongs to the cytochrome P450 family.</text>
</comment>
<organism>
    <name type="scientific">Arabidopsis thaliana</name>
    <name type="common">Mouse-ear cress</name>
    <dbReference type="NCBI Taxonomy" id="3702"/>
    <lineage>
        <taxon>Eukaryota</taxon>
        <taxon>Viridiplantae</taxon>
        <taxon>Streptophyta</taxon>
        <taxon>Embryophyta</taxon>
        <taxon>Tracheophyta</taxon>
        <taxon>Spermatophyta</taxon>
        <taxon>Magnoliopsida</taxon>
        <taxon>eudicotyledons</taxon>
        <taxon>Gunneridae</taxon>
        <taxon>Pentapetalae</taxon>
        <taxon>rosids</taxon>
        <taxon>malvids</taxon>
        <taxon>Brassicales</taxon>
        <taxon>Brassicaceae</taxon>
        <taxon>Camelineae</taxon>
        <taxon>Arabidopsis</taxon>
    </lineage>
</organism>
<sequence length="510" mass="58049">MLTVDSQHCFSFILLCFFSLLCYSLLFKKLKDSHVGRDLLQSPPSLPIIGHLHHLLSSLAHKSLQQLSSKYGPLLHLSIFNFPVVLVSSASVAYEIFKAHDLNISSRDNPPINESLLVGSSVFVGAPYGDYWKFMKKLLVTKLLGPQALERSRSIRADELERFYRSLLDKAMKKESVEIGKEATKLSINSICRMSMGRSFSEESGEAERVRGLVTELDGLTKKVLLVNILRWPLEKLRISLFKKEIMYVSNSFDELLERIIVEREKKPNEHQGTYLMDVLLEAYEDEKAEHKITRNHIKSLFVELLLGGTDTSAQTIQWTMAELINNRNVLKRLREEIDSVVGETRLIQEKDLPKLPYLQSVVKEGLRLHPPLPLMVRTFQRSCEMKGFYIAEKTTLVVNAYAVMRDPTTWEDPDEFKPERFLRQEEERRALKHIAFGSGRRGCPGSNLATIFIGTAIGTMVQCFDLSIKGDKVKMDEVGGLNLTMAHPLECILVPRTQPFISNQQIPSL</sequence>
<evidence type="ECO:0000250" key="1"/>
<evidence type="ECO:0000255" key="2"/>
<evidence type="ECO:0000305" key="3"/>